<proteinExistence type="inferred from homology"/>
<keyword id="KW-0027">Amidation</keyword>
<keyword id="KW-0044">Antibiotic</keyword>
<keyword id="KW-0929">Antimicrobial</keyword>
<keyword id="KW-0102">Bromination</keyword>
<keyword id="KW-0964">Secreted</keyword>
<keyword id="KW-0732">Signal</keyword>
<sequence length="80" mass="9248">MQMKATILIVLVALFMIQQSEAGWFGKAFRSVSNFYKKHKTYIHAGLSAATLLGDMTDEEFQEFMQDIEQAREEELLSRQ</sequence>
<comment type="function">
    <text>Bactericidal against several Gram-positive and Gram-negative bacteria.</text>
</comment>
<comment type="subcellular location">
    <subcellularLocation>
        <location>Secreted</location>
    </subcellularLocation>
</comment>
<dbReference type="EMBL" id="Y13268">
    <property type="protein sequence ID" value="CAA73717.1"/>
    <property type="molecule type" value="mRNA"/>
</dbReference>
<dbReference type="SMR" id="O18494"/>
<dbReference type="GO" id="GO:0005576">
    <property type="term" value="C:extracellular region"/>
    <property type="evidence" value="ECO:0007669"/>
    <property type="project" value="UniProtKB-SubCell"/>
</dbReference>
<dbReference type="GO" id="GO:0042742">
    <property type="term" value="P:defense response to bacterium"/>
    <property type="evidence" value="ECO:0007669"/>
    <property type="project" value="UniProtKB-KW"/>
</dbReference>
<dbReference type="InterPro" id="IPR035578">
    <property type="entry name" value="Styelin"/>
</dbReference>
<dbReference type="Pfam" id="PF17562">
    <property type="entry name" value="Styelin"/>
    <property type="match status" value="1"/>
</dbReference>
<organism>
    <name type="scientific">Styela clava</name>
    <name type="common">Sea squirt</name>
    <dbReference type="NCBI Taxonomy" id="7725"/>
    <lineage>
        <taxon>Eukaryota</taxon>
        <taxon>Metazoa</taxon>
        <taxon>Chordata</taxon>
        <taxon>Tunicata</taxon>
        <taxon>Ascidiacea</taxon>
        <taxon>Stolidobranchia</taxon>
        <taxon>Styelidae</taxon>
        <taxon>Styela</taxon>
    </lineage>
</organism>
<protein>
    <recommendedName>
        <fullName>Styelin-C</fullName>
    </recommendedName>
</protein>
<reference key="1">
    <citation type="journal article" date="1997" name="FEBS Lett.">
        <title>cDNA cloning of three cecropin-like antimicrobial peptides (Styelins) from the tunicate, Styela clava.</title>
        <authorList>
            <person name="Zhao C."/>
            <person name="Liaw L."/>
            <person name="Lee I.H."/>
            <person name="Lehrer R.I."/>
        </authorList>
    </citation>
    <scope>NUCLEOTIDE SEQUENCE [MRNA]</scope>
    <source>
        <tissue>Pharynx</tissue>
    </source>
</reference>
<feature type="signal peptide" evidence="2">
    <location>
        <begin position="1"/>
        <end position="22"/>
    </location>
</feature>
<feature type="peptide" id="PRO_0000022434" description="Styelin-C">
    <location>
        <begin position="23"/>
        <end position="53"/>
    </location>
</feature>
<feature type="propeptide" id="PRO_0000022435" description="Removed in mature form">
    <location>
        <begin position="55"/>
        <end position="80"/>
    </location>
</feature>
<feature type="modified residue" description="6'-bromotryptophan" evidence="1">
    <location>
        <position position="24"/>
    </location>
</feature>
<feature type="modified residue" description="Leucine amide" evidence="1">
    <location>
        <position position="53"/>
    </location>
</feature>
<evidence type="ECO:0000250" key="1"/>
<evidence type="ECO:0000255" key="2"/>
<name>STYC_STYCL</name>
<accession>O18494</accession>